<feature type="chain" id="PRO_1000200678" description="Exodeoxyribonuclease 7 large subunit">
    <location>
        <begin position="1"/>
        <end position="449"/>
    </location>
</feature>
<reference key="1">
    <citation type="journal article" date="2009" name="PLoS ONE">
        <title>Salmonella paratyphi C: genetic divergence from Salmonella choleraesuis and pathogenic convergence with Salmonella typhi.</title>
        <authorList>
            <person name="Liu W.-Q."/>
            <person name="Feng Y."/>
            <person name="Wang Y."/>
            <person name="Zou Q.-H."/>
            <person name="Chen F."/>
            <person name="Guo J.-T."/>
            <person name="Peng Y.-H."/>
            <person name="Jin Y."/>
            <person name="Li Y.-G."/>
            <person name="Hu S.-N."/>
            <person name="Johnston R.N."/>
            <person name="Liu G.-R."/>
            <person name="Liu S.-L."/>
        </authorList>
    </citation>
    <scope>NUCLEOTIDE SEQUENCE [LARGE SCALE GENOMIC DNA]</scope>
    <source>
        <strain>RKS4594</strain>
    </source>
</reference>
<evidence type="ECO:0000255" key="1">
    <source>
        <dbReference type="HAMAP-Rule" id="MF_00378"/>
    </source>
</evidence>
<protein>
    <recommendedName>
        <fullName evidence="1">Exodeoxyribonuclease 7 large subunit</fullName>
        <ecNumber evidence="1">3.1.11.6</ecNumber>
    </recommendedName>
    <alternativeName>
        <fullName evidence="1">Exodeoxyribonuclease VII large subunit</fullName>
        <shortName evidence="1">Exonuclease VII large subunit</shortName>
    </alternativeName>
</protein>
<organism>
    <name type="scientific">Salmonella paratyphi C (strain RKS4594)</name>
    <dbReference type="NCBI Taxonomy" id="476213"/>
    <lineage>
        <taxon>Bacteria</taxon>
        <taxon>Pseudomonadati</taxon>
        <taxon>Pseudomonadota</taxon>
        <taxon>Gammaproteobacteria</taxon>
        <taxon>Enterobacterales</taxon>
        <taxon>Enterobacteriaceae</taxon>
        <taxon>Salmonella</taxon>
    </lineage>
</organism>
<gene>
    <name evidence="1" type="primary">xseA</name>
    <name type="ordered locus">SPC_1143</name>
</gene>
<keyword id="KW-0963">Cytoplasm</keyword>
<keyword id="KW-0269">Exonuclease</keyword>
<keyword id="KW-0378">Hydrolase</keyword>
<keyword id="KW-0540">Nuclease</keyword>
<proteinExistence type="inferred from homology"/>
<comment type="function">
    <text evidence="1">Bidirectionally degrades single-stranded DNA into large acid-insoluble oligonucleotides, which are then degraded further into small acid-soluble oligonucleotides.</text>
</comment>
<comment type="catalytic activity">
    <reaction evidence="1">
        <text>Exonucleolytic cleavage in either 5'- to 3'- or 3'- to 5'-direction to yield nucleoside 5'-phosphates.</text>
        <dbReference type="EC" id="3.1.11.6"/>
    </reaction>
</comment>
<comment type="subunit">
    <text evidence="1">Heterooligomer composed of large and small subunits.</text>
</comment>
<comment type="subcellular location">
    <subcellularLocation>
        <location evidence="1">Cytoplasm</location>
    </subcellularLocation>
</comment>
<comment type="similarity">
    <text evidence="1">Belongs to the XseA family.</text>
</comment>
<name>EX7L_SALPC</name>
<accession>C0PYP2</accession>
<dbReference type="EC" id="3.1.11.6" evidence="1"/>
<dbReference type="EMBL" id="CP000857">
    <property type="protein sequence ID" value="ACN45309.1"/>
    <property type="molecule type" value="Genomic_DNA"/>
</dbReference>
<dbReference type="RefSeq" id="WP_000953167.1">
    <property type="nucleotide sequence ID" value="NC_012125.1"/>
</dbReference>
<dbReference type="SMR" id="C0PYP2"/>
<dbReference type="KEGG" id="sei:SPC_1143"/>
<dbReference type="HOGENOM" id="CLU_023625_3_1_6"/>
<dbReference type="Proteomes" id="UP000001599">
    <property type="component" value="Chromosome"/>
</dbReference>
<dbReference type="GO" id="GO:0005737">
    <property type="term" value="C:cytoplasm"/>
    <property type="evidence" value="ECO:0007669"/>
    <property type="project" value="UniProtKB-SubCell"/>
</dbReference>
<dbReference type="GO" id="GO:0009318">
    <property type="term" value="C:exodeoxyribonuclease VII complex"/>
    <property type="evidence" value="ECO:0007669"/>
    <property type="project" value="InterPro"/>
</dbReference>
<dbReference type="GO" id="GO:0008855">
    <property type="term" value="F:exodeoxyribonuclease VII activity"/>
    <property type="evidence" value="ECO:0007669"/>
    <property type="project" value="UniProtKB-UniRule"/>
</dbReference>
<dbReference type="GO" id="GO:0003676">
    <property type="term" value="F:nucleic acid binding"/>
    <property type="evidence" value="ECO:0007669"/>
    <property type="project" value="InterPro"/>
</dbReference>
<dbReference type="GO" id="GO:0006308">
    <property type="term" value="P:DNA catabolic process"/>
    <property type="evidence" value="ECO:0007669"/>
    <property type="project" value="UniProtKB-UniRule"/>
</dbReference>
<dbReference type="CDD" id="cd04489">
    <property type="entry name" value="ExoVII_LU_OBF"/>
    <property type="match status" value="1"/>
</dbReference>
<dbReference type="HAMAP" id="MF_00378">
    <property type="entry name" value="Exonuc_7_L"/>
    <property type="match status" value="1"/>
</dbReference>
<dbReference type="InterPro" id="IPR003753">
    <property type="entry name" value="Exonuc_VII_L"/>
</dbReference>
<dbReference type="InterPro" id="IPR020579">
    <property type="entry name" value="Exonuc_VII_lsu_C"/>
</dbReference>
<dbReference type="InterPro" id="IPR025824">
    <property type="entry name" value="OB-fold_nuc-bd_dom"/>
</dbReference>
<dbReference type="NCBIfam" id="TIGR00237">
    <property type="entry name" value="xseA"/>
    <property type="match status" value="1"/>
</dbReference>
<dbReference type="PANTHER" id="PTHR30008">
    <property type="entry name" value="EXODEOXYRIBONUCLEASE 7 LARGE SUBUNIT"/>
    <property type="match status" value="1"/>
</dbReference>
<dbReference type="PANTHER" id="PTHR30008:SF0">
    <property type="entry name" value="EXODEOXYRIBONUCLEASE 7 LARGE SUBUNIT"/>
    <property type="match status" value="1"/>
</dbReference>
<dbReference type="Pfam" id="PF02601">
    <property type="entry name" value="Exonuc_VII_L"/>
    <property type="match status" value="1"/>
</dbReference>
<dbReference type="Pfam" id="PF13742">
    <property type="entry name" value="tRNA_anti_2"/>
    <property type="match status" value="1"/>
</dbReference>
<sequence>MLSSQTSSIFTVSRLNQTVRLLLEQEMGQVWISGEISNFTQPASGHWYFTLKDDTAQVRCAMFRNSNRRVTFRPQHGQQVLVRANITLYEPRGDYQIIAESMQPAGEGLLQQKYEQLKAKLQAEGLFDQQHKQPLPSPAHCVGVITSKTGAALHDILHVLKRRDPSLPVIIYPTAVQGDDAPGQIVRAIELANARGECDVLIVGRGGGSLEDLWSFNDERVARAIFASRIPVVSAVGHETDVTIADFVADLRAPTPSAAAEIVSRNQQELLRQIQSAQQRLGMAMDYYLANRSRRFTQIFHRLQQQHPQLRLARQQTALERLRQRMGFALEARIKQANQRQQRVSQRLSQQNPQPRIHRAQSRIQQLEYRLTENIRSRLSEQRERFGNAVTHLEAVSPLATLARGYTVSTTTDGKVLKKIKQVKAGDIMTTRLEDGWLESEVKSVTPGT</sequence>